<gene>
    <name type="primary">tubb</name>
    <name type="synonym">tubb5</name>
</gene>
<keyword id="KW-0963">Cytoplasm</keyword>
<keyword id="KW-0206">Cytoskeleton</keyword>
<keyword id="KW-0342">GTP-binding</keyword>
<keyword id="KW-1017">Isopeptide bond</keyword>
<keyword id="KW-0460">Magnesium</keyword>
<keyword id="KW-0479">Metal-binding</keyword>
<keyword id="KW-0493">Microtubule</keyword>
<keyword id="KW-0547">Nucleotide-binding</keyword>
<keyword id="KW-1185">Reference proteome</keyword>
<protein>
    <recommendedName>
        <fullName>Tubulin beta chain</fullName>
    </recommendedName>
    <alternativeName>
        <fullName>Tubulin beta-5 chain</fullName>
    </alternativeName>
</protein>
<feature type="chain" id="PRO_0000297532" description="Tubulin beta chain">
    <location>
        <begin position="1"/>
        <end position="444"/>
    </location>
</feature>
<feature type="region of interest" description="Disordered" evidence="8">
    <location>
        <begin position="421"/>
        <end position="444"/>
    </location>
</feature>
<feature type="short sequence motif" description="MREI motif" evidence="3">
    <location>
        <begin position="1"/>
        <end position="4"/>
    </location>
</feature>
<feature type="compositionally biased region" description="Acidic residues" evidence="8">
    <location>
        <begin position="429"/>
        <end position="444"/>
    </location>
</feature>
<feature type="binding site" evidence="5">
    <location>
        <position position="11"/>
    </location>
    <ligand>
        <name>GTP</name>
        <dbReference type="ChEBI" id="CHEBI:37565"/>
    </ligand>
</feature>
<feature type="binding site" evidence="4">
    <location>
        <position position="69"/>
    </location>
    <ligand>
        <name>GTP</name>
        <dbReference type="ChEBI" id="CHEBI:37565"/>
    </ligand>
</feature>
<feature type="binding site" evidence="4">
    <location>
        <position position="69"/>
    </location>
    <ligand>
        <name>Mg(2+)</name>
        <dbReference type="ChEBI" id="CHEBI:18420"/>
    </ligand>
</feature>
<feature type="binding site" evidence="5">
    <location>
        <position position="138"/>
    </location>
    <ligand>
        <name>GTP</name>
        <dbReference type="ChEBI" id="CHEBI:37565"/>
    </ligand>
</feature>
<feature type="binding site" evidence="5">
    <location>
        <position position="142"/>
    </location>
    <ligand>
        <name>GTP</name>
        <dbReference type="ChEBI" id="CHEBI:37565"/>
    </ligand>
</feature>
<feature type="binding site" evidence="5">
    <location>
        <position position="143"/>
    </location>
    <ligand>
        <name>GTP</name>
        <dbReference type="ChEBI" id="CHEBI:37565"/>
    </ligand>
</feature>
<feature type="binding site" evidence="5">
    <location>
        <position position="144"/>
    </location>
    <ligand>
        <name>GTP</name>
        <dbReference type="ChEBI" id="CHEBI:37565"/>
    </ligand>
</feature>
<feature type="binding site" evidence="5">
    <location>
        <position position="204"/>
    </location>
    <ligand>
        <name>GTP</name>
        <dbReference type="ChEBI" id="CHEBI:37565"/>
    </ligand>
</feature>
<feature type="binding site" evidence="5">
    <location>
        <position position="226"/>
    </location>
    <ligand>
        <name>GTP</name>
        <dbReference type="ChEBI" id="CHEBI:37565"/>
    </ligand>
</feature>
<feature type="modified residue" description="5-glutamyl polyglutamate" evidence="6">
    <location>
        <position position="438"/>
    </location>
</feature>
<sequence length="444" mass="49728">MREIVHIQAGQCGNQIGAKFWEVISDEHGIDPTGTYHGDSDLQLDRISVYYNEATGGKYVPRAILVDLEPGTMDSVRSGPFGQIFRPDNFVFGQSGAGNNWAKGHYTEGAELVDSVLDVVRKEAESCDCLQGFQLTHSLGGGTGSGMGTLLISKIREEYPDRIMNTFSVVPSPKVSDTVVEPYNATLSVHQLVENTDETYCIDNEALYDICFRTLKLTTPTYGDLNHLVSATMSGVTTCLRFPGQLNADLRKLAVNMVPFPRLHFFMPGFAPLTSRGSQQYRALTVPELTQQVFDAKNMMAACDPRHGRYLTVAAVFRGRMSMKEVDEQMLNVQNKNSSYFVEWIPNNVKTAVCDIPPRGLKMAVTFIGNSTAIQELFKRISEQFTAMFRRKAFLHWYTGEGMDEMEFTEAESNMNDLVSEYQQYQDATAEEEEDFNEEAEEEA</sequence>
<proteinExistence type="evidence at transcript level"/>
<comment type="function">
    <text>Tubulin is the major constituent of microtubules, a cylinder consisting of laterally associated linear protofilaments composed of alpha- and beta-tubulin heterodimers. Microtubules grow by the addition of GTP-tubulin dimers to the microtubule end, where a stabilizing cap forms. Below the cap, tubulin dimers are in GDP-bound state, owing to GTPase activity of alpha-tubulin.</text>
</comment>
<comment type="cofactor">
    <cofactor evidence="4">
        <name>Mg(2+)</name>
        <dbReference type="ChEBI" id="CHEBI:18420"/>
    </cofactor>
</comment>
<comment type="subunit">
    <text>Dimer of alpha and beta chains. A typical microtubule is a hollow water-filled tube with an outer diameter of 25 nm and an inner diameter of 15 nM. Alpha-beta heterodimers associate head-to-tail to form protofilaments running lengthwise along the microtubule wall with the beta-tubulin subunit facing the microtubule plus end conferring a structural polarity. Microtubules usually have 13 protofilaments but different protofilament numbers can be found in some organisms and specialized cells.</text>
</comment>
<comment type="subcellular location">
    <subcellularLocation>
        <location evidence="1">Cytoplasm</location>
        <location evidence="1">Cytoskeleton</location>
    </subcellularLocation>
</comment>
<comment type="domain">
    <text evidence="3">The MREI motif is common among all beta-tubulin isoforms and may be critical for tubulin autoregulation.</text>
</comment>
<comment type="PTM">
    <text evidence="2">Some glutamate residues at the C-terminus are polyglycylated, resulting in polyglycine chains on the gamma-carboxyl group. Glycylation is mainly limited to tubulin incorporated into axonemes (cilia and flagella) whereas glutamylation is prevalent in neuronal cells, centrioles, axonemes, and the mitotic spindle. Both modifications can coexist on the same protein on adjacent residues, and lowering polyglycylation levels increases polyglutamylation, and reciprocally. The precise function of polyglycylation is still unclear.</text>
</comment>
<comment type="PTM">
    <text evidence="2 7">Some glutamate residues at the C-terminus are polyglutamylated, resulting in polyglutamate chains on the gamma-carboxyl group (By similarity). Polyglutamylation plays a key role in microtubule severing by spastin (SPAST). SPAST preferentially recognizes and acts on microtubules decorated with short polyglutamate tails: severing activity by SPAST increases as the number of glutamates per tubulin rises from one to eight, but decreases beyond this glutamylation threshold (By similarity).</text>
</comment>
<comment type="similarity">
    <text evidence="9">Belongs to the tubulin family.</text>
</comment>
<dbReference type="EMBL" id="BC074549">
    <property type="protein sequence ID" value="AAH74549.1"/>
    <property type="molecule type" value="mRNA"/>
</dbReference>
<dbReference type="RefSeq" id="NP_001006895.1">
    <property type="nucleotide sequence ID" value="NM_001006894.1"/>
</dbReference>
<dbReference type="SMR" id="Q6GLE7"/>
<dbReference type="FunCoup" id="Q6GLE7">
    <property type="interactions" value="2103"/>
</dbReference>
<dbReference type="STRING" id="8364.ENSXETP00000025038"/>
<dbReference type="PaxDb" id="8364-ENSXETP00000052187"/>
<dbReference type="DNASU" id="448742"/>
<dbReference type="GeneID" id="448742"/>
<dbReference type="KEGG" id="xtr:448742"/>
<dbReference type="AGR" id="Xenbase:XB-GENE-482185"/>
<dbReference type="CTD" id="203068"/>
<dbReference type="Xenbase" id="XB-GENE-482185">
    <property type="gene designation" value="tubb"/>
</dbReference>
<dbReference type="eggNOG" id="KOG1375">
    <property type="taxonomic scope" value="Eukaryota"/>
</dbReference>
<dbReference type="HOGENOM" id="CLU_015718_1_1_1"/>
<dbReference type="InParanoid" id="Q6GLE7"/>
<dbReference type="OMA" id="MANTTKY"/>
<dbReference type="OrthoDB" id="1662883at2759"/>
<dbReference type="PhylomeDB" id="Q6GLE7"/>
<dbReference type="TreeFam" id="TF300298"/>
<dbReference type="Reactome" id="R-XTR-2565942">
    <property type="pathway name" value="Regulation of PLK1 Activity at G2/M Transition"/>
</dbReference>
<dbReference type="Reactome" id="R-XTR-380259">
    <property type="pathway name" value="Loss of Nlp from mitotic centrosomes"/>
</dbReference>
<dbReference type="Reactome" id="R-XTR-380270">
    <property type="pathway name" value="Recruitment of mitotic centrosome proteins and complexes"/>
</dbReference>
<dbReference type="Reactome" id="R-XTR-380320">
    <property type="pathway name" value="Recruitment of NuMA to mitotic centrosomes"/>
</dbReference>
<dbReference type="Reactome" id="R-XTR-5620912">
    <property type="pathway name" value="Anchoring of the basal body to the plasma membrane"/>
</dbReference>
<dbReference type="Reactome" id="R-XTR-6798695">
    <property type="pathway name" value="Neutrophil degranulation"/>
</dbReference>
<dbReference type="Reactome" id="R-XTR-8854518">
    <property type="pathway name" value="AURKA Activation by TPX2"/>
</dbReference>
<dbReference type="Proteomes" id="UP000008143">
    <property type="component" value="Chromosome 8"/>
</dbReference>
<dbReference type="Bgee" id="ENSXETG00000024084">
    <property type="expression patterns" value="Expressed in neurula embryo and 18 other cell types or tissues"/>
</dbReference>
<dbReference type="GO" id="GO:0005737">
    <property type="term" value="C:cytoplasm"/>
    <property type="evidence" value="ECO:0007669"/>
    <property type="project" value="UniProtKB-KW"/>
</dbReference>
<dbReference type="GO" id="GO:0005874">
    <property type="term" value="C:microtubule"/>
    <property type="evidence" value="ECO:0007669"/>
    <property type="project" value="UniProtKB-KW"/>
</dbReference>
<dbReference type="GO" id="GO:0005525">
    <property type="term" value="F:GTP binding"/>
    <property type="evidence" value="ECO:0007669"/>
    <property type="project" value="UniProtKB-KW"/>
</dbReference>
<dbReference type="GO" id="GO:0003924">
    <property type="term" value="F:GTPase activity"/>
    <property type="evidence" value="ECO:0007669"/>
    <property type="project" value="InterPro"/>
</dbReference>
<dbReference type="GO" id="GO:0046872">
    <property type="term" value="F:metal ion binding"/>
    <property type="evidence" value="ECO:0007669"/>
    <property type="project" value="UniProtKB-KW"/>
</dbReference>
<dbReference type="GO" id="GO:0005200">
    <property type="term" value="F:structural constituent of cytoskeleton"/>
    <property type="evidence" value="ECO:0007669"/>
    <property type="project" value="InterPro"/>
</dbReference>
<dbReference type="GO" id="GO:0007017">
    <property type="term" value="P:microtubule-based process"/>
    <property type="evidence" value="ECO:0007669"/>
    <property type="project" value="InterPro"/>
</dbReference>
<dbReference type="CDD" id="cd02187">
    <property type="entry name" value="beta_tubulin"/>
    <property type="match status" value="1"/>
</dbReference>
<dbReference type="FunFam" id="1.10.287.600:FF:000002">
    <property type="entry name" value="Tubulin beta chain"/>
    <property type="match status" value="1"/>
</dbReference>
<dbReference type="FunFam" id="3.30.1330.20:FF:000002">
    <property type="entry name" value="Tubulin beta chain"/>
    <property type="match status" value="1"/>
</dbReference>
<dbReference type="FunFam" id="3.40.50.1440:FF:000003">
    <property type="entry name" value="Tubulin beta chain"/>
    <property type="match status" value="1"/>
</dbReference>
<dbReference type="Gene3D" id="1.10.287.600">
    <property type="entry name" value="Helix hairpin bin"/>
    <property type="match status" value="1"/>
</dbReference>
<dbReference type="Gene3D" id="3.30.1330.20">
    <property type="entry name" value="Tubulin/FtsZ, C-terminal domain"/>
    <property type="match status" value="1"/>
</dbReference>
<dbReference type="Gene3D" id="3.40.50.1440">
    <property type="entry name" value="Tubulin/FtsZ, GTPase domain"/>
    <property type="match status" value="1"/>
</dbReference>
<dbReference type="InterPro" id="IPR013838">
    <property type="entry name" value="Beta-tubulin_BS"/>
</dbReference>
<dbReference type="InterPro" id="IPR002453">
    <property type="entry name" value="Beta_tubulin"/>
</dbReference>
<dbReference type="InterPro" id="IPR008280">
    <property type="entry name" value="Tub_FtsZ_C"/>
</dbReference>
<dbReference type="InterPro" id="IPR000217">
    <property type="entry name" value="Tubulin"/>
</dbReference>
<dbReference type="InterPro" id="IPR037103">
    <property type="entry name" value="Tubulin/FtsZ-like_C"/>
</dbReference>
<dbReference type="InterPro" id="IPR018316">
    <property type="entry name" value="Tubulin/FtsZ_2-layer-sand-dom"/>
</dbReference>
<dbReference type="InterPro" id="IPR036525">
    <property type="entry name" value="Tubulin/FtsZ_GTPase_sf"/>
</dbReference>
<dbReference type="InterPro" id="IPR023123">
    <property type="entry name" value="Tubulin_C"/>
</dbReference>
<dbReference type="InterPro" id="IPR017975">
    <property type="entry name" value="Tubulin_CS"/>
</dbReference>
<dbReference type="InterPro" id="IPR003008">
    <property type="entry name" value="Tubulin_FtsZ_GTPase"/>
</dbReference>
<dbReference type="PANTHER" id="PTHR11588">
    <property type="entry name" value="TUBULIN"/>
    <property type="match status" value="1"/>
</dbReference>
<dbReference type="Pfam" id="PF00091">
    <property type="entry name" value="Tubulin"/>
    <property type="match status" value="1"/>
</dbReference>
<dbReference type="Pfam" id="PF03953">
    <property type="entry name" value="Tubulin_C"/>
    <property type="match status" value="1"/>
</dbReference>
<dbReference type="PRINTS" id="PR01163">
    <property type="entry name" value="BETATUBULIN"/>
</dbReference>
<dbReference type="PRINTS" id="PR01161">
    <property type="entry name" value="TUBULIN"/>
</dbReference>
<dbReference type="SMART" id="SM00864">
    <property type="entry name" value="Tubulin"/>
    <property type="match status" value="1"/>
</dbReference>
<dbReference type="SMART" id="SM00865">
    <property type="entry name" value="Tubulin_C"/>
    <property type="match status" value="1"/>
</dbReference>
<dbReference type="SUPFAM" id="SSF55307">
    <property type="entry name" value="Tubulin C-terminal domain-like"/>
    <property type="match status" value="1"/>
</dbReference>
<dbReference type="SUPFAM" id="SSF52490">
    <property type="entry name" value="Tubulin nucleotide-binding domain-like"/>
    <property type="match status" value="1"/>
</dbReference>
<dbReference type="PROSITE" id="PS00227">
    <property type="entry name" value="TUBULIN"/>
    <property type="match status" value="1"/>
</dbReference>
<dbReference type="PROSITE" id="PS00228">
    <property type="entry name" value="TUBULIN_B_AUTOREG"/>
    <property type="match status" value="1"/>
</dbReference>
<reference key="1">
    <citation type="submission" date="2004-06" db="EMBL/GenBank/DDBJ databases">
        <authorList>
            <consortium name="NIH - Xenopus Gene Collection (XGC) project"/>
        </authorList>
    </citation>
    <scope>NUCLEOTIDE SEQUENCE [LARGE SCALE MRNA]</scope>
    <source>
        <tissue>Embryo</tissue>
    </source>
</reference>
<evidence type="ECO:0000250" key="1"/>
<evidence type="ECO:0000250" key="2">
    <source>
        <dbReference type="UniProtKB" id="A2AQ07"/>
    </source>
</evidence>
<evidence type="ECO:0000250" key="3">
    <source>
        <dbReference type="UniProtKB" id="P07437"/>
    </source>
</evidence>
<evidence type="ECO:0000250" key="4">
    <source>
        <dbReference type="UniProtKB" id="P68363"/>
    </source>
</evidence>
<evidence type="ECO:0000250" key="5">
    <source>
        <dbReference type="UniProtKB" id="Q13509"/>
    </source>
</evidence>
<evidence type="ECO:0000250" key="6">
    <source>
        <dbReference type="UniProtKB" id="Q2T9S0"/>
    </source>
</evidence>
<evidence type="ECO:0000250" key="7">
    <source>
        <dbReference type="UniProtKB" id="Q71U36"/>
    </source>
</evidence>
<evidence type="ECO:0000256" key="8">
    <source>
        <dbReference type="SAM" id="MobiDB-lite"/>
    </source>
</evidence>
<evidence type="ECO:0000305" key="9"/>
<name>TBB5_XENTR</name>
<organism>
    <name type="scientific">Xenopus tropicalis</name>
    <name type="common">Western clawed frog</name>
    <name type="synonym">Silurana tropicalis</name>
    <dbReference type="NCBI Taxonomy" id="8364"/>
    <lineage>
        <taxon>Eukaryota</taxon>
        <taxon>Metazoa</taxon>
        <taxon>Chordata</taxon>
        <taxon>Craniata</taxon>
        <taxon>Vertebrata</taxon>
        <taxon>Euteleostomi</taxon>
        <taxon>Amphibia</taxon>
        <taxon>Batrachia</taxon>
        <taxon>Anura</taxon>
        <taxon>Pipoidea</taxon>
        <taxon>Pipidae</taxon>
        <taxon>Xenopodinae</taxon>
        <taxon>Xenopus</taxon>
        <taxon>Silurana</taxon>
    </lineage>
</organism>
<accession>Q6GLE7</accession>